<accession>Q9HLQ2</accession>
<protein>
    <recommendedName>
        <fullName>Phosphoglycolate phosphatase</fullName>
        <shortName>PGP</shortName>
        <shortName>PGPase</shortName>
        <ecNumber>3.1.3.18</ecNumber>
    </recommendedName>
</protein>
<feature type="chain" id="PRO_0000146731" description="Phosphoglycolate phosphatase">
    <location>
        <begin position="1"/>
        <end position="224"/>
    </location>
</feature>
<feature type="active site" description="Nucleophile">
    <location>
        <position position="8"/>
    </location>
</feature>
<feature type="binding site">
    <location>
        <position position="8"/>
    </location>
    <ligand>
        <name>Mg(2+)</name>
        <dbReference type="ChEBI" id="CHEBI:18420"/>
        <label>1</label>
    </ligand>
</feature>
<feature type="binding site">
    <location>
        <position position="10"/>
    </location>
    <ligand>
        <name>Mg(2+)</name>
        <dbReference type="ChEBI" id="CHEBI:18420"/>
        <label>3</label>
    </ligand>
</feature>
<feature type="binding site">
    <location>
        <position position="11"/>
    </location>
    <ligand>
        <name>Mg(2+)</name>
        <dbReference type="ChEBI" id="CHEBI:18420"/>
        <label>2</label>
    </ligand>
</feature>
<feature type="binding site">
    <location>
        <position position="43"/>
    </location>
    <ligand>
        <name>Mg(2+)</name>
        <dbReference type="ChEBI" id="CHEBI:18420"/>
        <label>3</label>
    </ligand>
</feature>
<feature type="binding site" evidence="1">
    <location>
        <position position="151"/>
    </location>
    <ligand>
        <name>substrate</name>
    </ligand>
</feature>
<feature type="binding site">
    <location>
        <position position="174"/>
    </location>
    <ligand>
        <name>Mg(2+)</name>
        <dbReference type="ChEBI" id="CHEBI:18420"/>
        <label>1</label>
    </ligand>
</feature>
<feature type="binding site">
    <location>
        <position position="174"/>
    </location>
    <ligand>
        <name>Mg(2+)</name>
        <dbReference type="ChEBI" id="CHEBI:18420"/>
        <label>2</label>
    </ligand>
</feature>
<feature type="binding site">
    <location>
        <position position="175"/>
    </location>
    <ligand>
        <name>Mg(2+)</name>
        <dbReference type="ChEBI" id="CHEBI:18420"/>
        <label>1</label>
    </ligand>
</feature>
<feature type="binding site">
    <location>
        <position position="178"/>
    </location>
    <ligand>
        <name>Mg(2+)</name>
        <dbReference type="ChEBI" id="CHEBI:18420"/>
        <label>1</label>
    </ligand>
</feature>
<feature type="strand" evidence="4">
    <location>
        <begin position="4"/>
        <end position="8"/>
    </location>
</feature>
<feature type="helix" evidence="4">
    <location>
        <begin position="9"/>
        <end position="12"/>
    </location>
</feature>
<feature type="helix" evidence="4">
    <location>
        <begin position="22"/>
        <end position="33"/>
    </location>
</feature>
<feature type="strand" evidence="4">
    <location>
        <begin position="37"/>
        <end position="41"/>
    </location>
</feature>
<feature type="helix" evidence="4">
    <location>
        <begin position="46"/>
        <end position="56"/>
    </location>
</feature>
<feature type="strand" evidence="4">
    <location>
        <begin position="62"/>
        <end position="64"/>
    </location>
</feature>
<feature type="helix" evidence="4">
    <location>
        <begin position="65"/>
        <end position="67"/>
    </location>
</feature>
<feature type="strand" evidence="4">
    <location>
        <begin position="69"/>
        <end position="71"/>
    </location>
</feature>
<feature type="strand" evidence="4">
    <location>
        <begin position="77"/>
        <end position="81"/>
    </location>
</feature>
<feature type="helix" evidence="4">
    <location>
        <begin position="84"/>
        <end position="93"/>
    </location>
</feature>
<feature type="turn" evidence="4">
    <location>
        <begin position="94"/>
        <end position="96"/>
    </location>
</feature>
<feature type="helix" evidence="4">
    <location>
        <begin position="103"/>
        <end position="107"/>
    </location>
</feature>
<feature type="strand" evidence="4">
    <location>
        <begin position="109"/>
        <end position="115"/>
    </location>
</feature>
<feature type="helix" evidence="4">
    <location>
        <begin position="118"/>
        <end position="120"/>
    </location>
</feature>
<feature type="helix" evidence="4">
    <location>
        <begin position="121"/>
        <end position="129"/>
    </location>
</feature>
<feature type="turn" evidence="4">
    <location>
        <begin position="130"/>
        <end position="132"/>
    </location>
</feature>
<feature type="strand" evidence="4">
    <location>
        <begin position="133"/>
        <end position="138"/>
    </location>
</feature>
<feature type="strand" evidence="4">
    <location>
        <begin position="141"/>
        <end position="146"/>
    </location>
</feature>
<feature type="helix" evidence="4">
    <location>
        <begin position="151"/>
        <end position="161"/>
    </location>
</feature>
<feature type="helix" evidence="4">
    <location>
        <begin position="166"/>
        <end position="168"/>
    </location>
</feature>
<feature type="strand" evidence="4">
    <location>
        <begin position="169"/>
        <end position="172"/>
    </location>
</feature>
<feature type="helix" evidence="4">
    <location>
        <begin position="176"/>
        <end position="178"/>
    </location>
</feature>
<feature type="helix" evidence="4">
    <location>
        <begin position="179"/>
        <end position="182"/>
    </location>
</feature>
<feature type="strand" evidence="4">
    <location>
        <begin position="184"/>
        <end position="190"/>
    </location>
</feature>
<feature type="helix" evidence="4">
    <location>
        <begin position="196"/>
        <end position="201"/>
    </location>
</feature>
<feature type="strand" evidence="4">
    <location>
        <begin position="203"/>
        <end position="205"/>
    </location>
</feature>
<feature type="turn" evidence="4">
    <location>
        <begin position="210"/>
        <end position="212"/>
    </location>
</feature>
<feature type="helix" evidence="4">
    <location>
        <begin position="213"/>
        <end position="220"/>
    </location>
</feature>
<keyword id="KW-0002">3D-structure</keyword>
<keyword id="KW-0119">Carbohydrate metabolism</keyword>
<keyword id="KW-0378">Hydrolase</keyword>
<keyword id="KW-0460">Magnesium</keyword>
<keyword id="KW-0479">Metal-binding</keyword>
<keyword id="KW-1185">Reference proteome</keyword>
<dbReference type="EC" id="3.1.3.18"/>
<dbReference type="EMBL" id="AL445063">
    <property type="protein sequence ID" value="CAC11321.1"/>
    <property type="molecule type" value="Genomic_DNA"/>
</dbReference>
<dbReference type="RefSeq" id="WP_010900602.1">
    <property type="nucleotide sequence ID" value="NC_002578.1"/>
</dbReference>
<dbReference type="PDB" id="1KYT">
    <property type="method" value="X-ray"/>
    <property type="resolution" value="1.70 A"/>
    <property type="chains" value="A/B=1-224"/>
</dbReference>
<dbReference type="PDB" id="1L6R">
    <property type="method" value="X-ray"/>
    <property type="resolution" value="1.40 A"/>
    <property type="chains" value="A/B=1-224"/>
</dbReference>
<dbReference type="PDBsum" id="1KYT"/>
<dbReference type="PDBsum" id="1L6R"/>
<dbReference type="SMR" id="Q9HLQ2"/>
<dbReference type="FunCoup" id="Q9HLQ2">
    <property type="interactions" value="22"/>
</dbReference>
<dbReference type="STRING" id="273075.gene:9571389"/>
<dbReference type="PaxDb" id="273075-Ta0175"/>
<dbReference type="DNASU" id="1455819"/>
<dbReference type="EnsemblBacteria" id="CAC11321">
    <property type="protein sequence ID" value="CAC11321"/>
    <property type="gene ID" value="CAC11321"/>
</dbReference>
<dbReference type="KEGG" id="tac:Ta0175"/>
<dbReference type="eggNOG" id="arCOG01213">
    <property type="taxonomic scope" value="Archaea"/>
</dbReference>
<dbReference type="HOGENOM" id="CLU_044146_2_0_2"/>
<dbReference type="InParanoid" id="Q9HLQ2"/>
<dbReference type="OrthoDB" id="120822at2157"/>
<dbReference type="BRENDA" id="3.1.3.18">
    <property type="organism ID" value="6324"/>
</dbReference>
<dbReference type="SABIO-RK" id="Q9HLQ2"/>
<dbReference type="EvolutionaryTrace" id="Q9HLQ2"/>
<dbReference type="Proteomes" id="UP000001024">
    <property type="component" value="Chromosome"/>
</dbReference>
<dbReference type="GO" id="GO:0005829">
    <property type="term" value="C:cytosol"/>
    <property type="evidence" value="ECO:0007669"/>
    <property type="project" value="TreeGrafter"/>
</dbReference>
<dbReference type="GO" id="GO:0000287">
    <property type="term" value="F:magnesium ion binding"/>
    <property type="evidence" value="ECO:0007669"/>
    <property type="project" value="InterPro"/>
</dbReference>
<dbReference type="GO" id="GO:0008967">
    <property type="term" value="F:phosphoglycolate phosphatase activity"/>
    <property type="evidence" value="ECO:0007669"/>
    <property type="project" value="UniProtKB-UniRule"/>
</dbReference>
<dbReference type="CDD" id="cd01427">
    <property type="entry name" value="HAD_like"/>
    <property type="match status" value="1"/>
</dbReference>
<dbReference type="CDD" id="cd07514">
    <property type="entry name" value="HAD_Pase"/>
    <property type="match status" value="1"/>
</dbReference>
<dbReference type="Gene3D" id="3.90.1070.10">
    <property type="match status" value="1"/>
</dbReference>
<dbReference type="Gene3D" id="3.40.50.1000">
    <property type="entry name" value="HAD superfamily/HAD-like"/>
    <property type="match status" value="1"/>
</dbReference>
<dbReference type="HAMAP" id="MF_01419">
    <property type="entry name" value="GPH_hydrolase_arch"/>
    <property type="match status" value="1"/>
</dbReference>
<dbReference type="InterPro" id="IPR036412">
    <property type="entry name" value="HAD-like_sf"/>
</dbReference>
<dbReference type="InterPro" id="IPR023214">
    <property type="entry name" value="HAD_sf"/>
</dbReference>
<dbReference type="InterPro" id="IPR006382">
    <property type="entry name" value="PGPase"/>
</dbReference>
<dbReference type="NCBIfam" id="TIGR01487">
    <property type="entry name" value="Pglycolate_arch"/>
    <property type="match status" value="1"/>
</dbReference>
<dbReference type="NCBIfam" id="NF002245">
    <property type="entry name" value="PRK01158.1"/>
    <property type="match status" value="1"/>
</dbReference>
<dbReference type="NCBIfam" id="TIGR01482">
    <property type="entry name" value="SPP-subfamily"/>
    <property type="match status" value="1"/>
</dbReference>
<dbReference type="PANTHER" id="PTHR10000:SF8">
    <property type="entry name" value="HAD SUPERFAMILY HYDROLASE-LIKE, TYPE 3"/>
    <property type="match status" value="1"/>
</dbReference>
<dbReference type="PANTHER" id="PTHR10000">
    <property type="entry name" value="PHOSPHOSERINE PHOSPHATASE"/>
    <property type="match status" value="1"/>
</dbReference>
<dbReference type="Pfam" id="PF08282">
    <property type="entry name" value="Hydrolase_3"/>
    <property type="match status" value="2"/>
</dbReference>
<dbReference type="SFLD" id="SFLDS00003">
    <property type="entry name" value="Haloacid_Dehalogenase"/>
    <property type="match status" value="1"/>
</dbReference>
<dbReference type="SFLD" id="SFLDF00446">
    <property type="entry name" value="phosphoglycolate_phosphatase_3"/>
    <property type="match status" value="1"/>
</dbReference>
<dbReference type="SUPFAM" id="SSF56784">
    <property type="entry name" value="HAD-like"/>
    <property type="match status" value="1"/>
</dbReference>
<proteinExistence type="evidence at protein level"/>
<name>PGP_THEAC</name>
<reference key="1">
    <citation type="journal article" date="2000" name="Nature">
        <title>The genome sequence of the thermoacidophilic scavenger Thermoplasma acidophilum.</title>
        <authorList>
            <person name="Ruepp A."/>
            <person name="Graml W."/>
            <person name="Santos-Martinez M.-L."/>
            <person name="Koretke K.K."/>
            <person name="Volker C."/>
            <person name="Mewes H.-W."/>
            <person name="Frishman D."/>
            <person name="Stocker S."/>
            <person name="Lupas A.N."/>
            <person name="Baumeister W."/>
        </authorList>
    </citation>
    <scope>NUCLEOTIDE SEQUENCE [LARGE SCALE GENOMIC DNA]</scope>
    <source>
        <strain>ATCC 25905 / DSM 1728 / JCM 9062 / NBRC 15155 / AMRC-C165</strain>
    </source>
</reference>
<reference key="2">
    <citation type="journal article" date="2004" name="J. Biol. Chem.">
        <title>Structure- and function-based characterization of a new phosphoglycolate phosphatase from Thermoplasma acidophilum.</title>
        <authorList>
            <person name="Kim Y."/>
            <person name="Yakunin A.F."/>
            <person name="Kuznetsova E."/>
            <person name="Xu X."/>
            <person name="Pennycooke M."/>
            <person name="Gu J."/>
            <person name="Cheung F."/>
            <person name="Proudfoot M."/>
            <person name="Arrowsmith C.H."/>
            <person name="Joachimiak A."/>
            <person name="Edwards A.M."/>
            <person name="Christendat D."/>
        </authorList>
    </citation>
    <scope>X-RAY CRYSTALLOGRAPHY (1.4 ANGSTROMS)</scope>
    <scope>FUNCTION</scope>
    <scope>COFACTOR</scope>
    <scope>KINETIC PARAMETERS</scope>
    <scope>SUBUNIT</scope>
    <source>
        <strain>ATCC 25905 / DSM 1728 / JCM 9062 / NBRC 15155 / AMRC-C165</strain>
    </source>
</reference>
<organism>
    <name type="scientific">Thermoplasma acidophilum (strain ATCC 25905 / DSM 1728 / JCM 9062 / NBRC 15155 / AMRC-C165)</name>
    <dbReference type="NCBI Taxonomy" id="273075"/>
    <lineage>
        <taxon>Archaea</taxon>
        <taxon>Methanobacteriati</taxon>
        <taxon>Thermoplasmatota</taxon>
        <taxon>Thermoplasmata</taxon>
        <taxon>Thermoplasmatales</taxon>
        <taxon>Thermoplasmataceae</taxon>
        <taxon>Thermoplasma</taxon>
    </lineage>
</organism>
<comment type="function">
    <text evidence="2">Catalyzes the dephosphorylation of 2-phosphoglycolate. Also has significant, but less efficient, pyrophosphatase activity, since it is able to catalyze the release of phosphate from inorganic pyrophosphate (PPi).</text>
</comment>
<comment type="catalytic activity">
    <reaction>
        <text>2-phosphoglycolate + H2O = glycolate + phosphate</text>
        <dbReference type="Rhea" id="RHEA:14369"/>
        <dbReference type="ChEBI" id="CHEBI:15377"/>
        <dbReference type="ChEBI" id="CHEBI:29805"/>
        <dbReference type="ChEBI" id="CHEBI:43474"/>
        <dbReference type="ChEBI" id="CHEBI:58033"/>
        <dbReference type="EC" id="3.1.3.18"/>
    </reaction>
</comment>
<comment type="cofactor">
    <cofactor evidence="2">
        <name>Mg(2+)</name>
        <dbReference type="ChEBI" id="CHEBI:18420"/>
    </cofactor>
    <text evidence="2">Binds 5 Mg(2+) ions per homodimer.</text>
</comment>
<comment type="activity regulation">
    <text>Inhibited by Ca(2+) ions and by high chloride ion concentration. By contrast, low chloride concentration (up to 50 mM) slightly activate the enzyme.</text>
</comment>
<comment type="biophysicochemical properties">
    <kinetics>
        <KM evidence="2">0.037 mM for 2-phosphoglycolate</KM>
        <KM evidence="2">3.1 mM for pNPP</KM>
        <KM evidence="2">0.17 mM for pyrophosphate</KM>
    </kinetics>
</comment>
<comment type="subunit">
    <text evidence="2">Homodimer.</text>
</comment>
<comment type="similarity">
    <text evidence="3">Belongs to the HAD-like hydrolase superfamily. Archaeal SPP-like hydrolase family.</text>
</comment>
<evidence type="ECO:0000250" key="1"/>
<evidence type="ECO:0000269" key="2">
    <source>
    </source>
</evidence>
<evidence type="ECO:0000305" key="3"/>
<evidence type="ECO:0007829" key="4">
    <source>
        <dbReference type="PDB" id="1L6R"/>
    </source>
</evidence>
<sequence length="224" mass="25279">MIRLAAIDVDGTLTDRDRLISTKAIESIRSAEKKGLTVSLLSGNVIPVVYALKIFLGINGPVFGENGGIMFDNDGSIKKFFSNEGTNKFLEEMSKRTSMRSILTNRWREASTGFDIDPEDVDYVRKEAESRGFVIFYSGYSWHLMNRGEDKAFAVNKLKEMYSLEYDEILVIGDSNNDMPMFQLPVRKACPANATDNIKAVSDFVSDYSYGEEIGQIFKHFELM</sequence>
<gene>
    <name type="ordered locus">Ta0175</name>
</gene>